<proteinExistence type="inferred from homology"/>
<feature type="chain" id="PRO_0000264415" description="UDP-3-O-acylglucosamine N-acyltransferase">
    <location>
        <begin position="1"/>
        <end position="351"/>
    </location>
</feature>
<feature type="active site" description="Proton acceptor" evidence="1">
    <location>
        <position position="240"/>
    </location>
</feature>
<dbReference type="EC" id="2.3.1.191" evidence="1"/>
<dbReference type="EMBL" id="CP000058">
    <property type="protein sequence ID" value="AAZ34441.1"/>
    <property type="molecule type" value="Genomic_DNA"/>
</dbReference>
<dbReference type="RefSeq" id="WP_011169293.1">
    <property type="nucleotide sequence ID" value="NC_005773.3"/>
</dbReference>
<dbReference type="SMR" id="Q48F69"/>
<dbReference type="KEGG" id="psp:PSPPH_3830"/>
<dbReference type="eggNOG" id="COG1044">
    <property type="taxonomic scope" value="Bacteria"/>
</dbReference>
<dbReference type="HOGENOM" id="CLU_049865_0_1_6"/>
<dbReference type="UniPathway" id="UPA00973"/>
<dbReference type="Proteomes" id="UP000000551">
    <property type="component" value="Chromosome"/>
</dbReference>
<dbReference type="GO" id="GO:0016020">
    <property type="term" value="C:membrane"/>
    <property type="evidence" value="ECO:0007669"/>
    <property type="project" value="GOC"/>
</dbReference>
<dbReference type="GO" id="GO:0016410">
    <property type="term" value="F:N-acyltransferase activity"/>
    <property type="evidence" value="ECO:0007669"/>
    <property type="project" value="InterPro"/>
</dbReference>
<dbReference type="GO" id="GO:0009245">
    <property type="term" value="P:lipid A biosynthetic process"/>
    <property type="evidence" value="ECO:0007669"/>
    <property type="project" value="UniProtKB-UniRule"/>
</dbReference>
<dbReference type="CDD" id="cd03352">
    <property type="entry name" value="LbH_LpxD"/>
    <property type="match status" value="1"/>
</dbReference>
<dbReference type="Gene3D" id="1.20.5.170">
    <property type="match status" value="1"/>
</dbReference>
<dbReference type="Gene3D" id="2.160.10.10">
    <property type="entry name" value="Hexapeptide repeat proteins"/>
    <property type="match status" value="1"/>
</dbReference>
<dbReference type="Gene3D" id="3.40.1390.10">
    <property type="entry name" value="MurE/MurF, N-terminal domain"/>
    <property type="match status" value="1"/>
</dbReference>
<dbReference type="HAMAP" id="MF_00523">
    <property type="entry name" value="LpxD"/>
    <property type="match status" value="1"/>
</dbReference>
<dbReference type="InterPro" id="IPR001451">
    <property type="entry name" value="Hexapep"/>
</dbReference>
<dbReference type="InterPro" id="IPR018357">
    <property type="entry name" value="Hexapep_transf_CS"/>
</dbReference>
<dbReference type="InterPro" id="IPR007691">
    <property type="entry name" value="LpxD"/>
</dbReference>
<dbReference type="InterPro" id="IPR011004">
    <property type="entry name" value="Trimer_LpxA-like_sf"/>
</dbReference>
<dbReference type="InterPro" id="IPR020573">
    <property type="entry name" value="UDP_GlcNAc_AcTrfase_non-rep"/>
</dbReference>
<dbReference type="NCBIfam" id="TIGR01853">
    <property type="entry name" value="lipid_A_lpxD"/>
    <property type="match status" value="1"/>
</dbReference>
<dbReference type="NCBIfam" id="NF002060">
    <property type="entry name" value="PRK00892.1"/>
    <property type="match status" value="1"/>
</dbReference>
<dbReference type="PANTHER" id="PTHR43378">
    <property type="entry name" value="UDP-3-O-ACYLGLUCOSAMINE N-ACYLTRANSFERASE"/>
    <property type="match status" value="1"/>
</dbReference>
<dbReference type="PANTHER" id="PTHR43378:SF2">
    <property type="entry name" value="UDP-3-O-ACYLGLUCOSAMINE N-ACYLTRANSFERASE 1, MITOCHONDRIAL-RELATED"/>
    <property type="match status" value="1"/>
</dbReference>
<dbReference type="Pfam" id="PF00132">
    <property type="entry name" value="Hexapep"/>
    <property type="match status" value="1"/>
</dbReference>
<dbReference type="Pfam" id="PF04613">
    <property type="entry name" value="LpxD"/>
    <property type="match status" value="1"/>
</dbReference>
<dbReference type="SUPFAM" id="SSF51161">
    <property type="entry name" value="Trimeric LpxA-like enzymes"/>
    <property type="match status" value="1"/>
</dbReference>
<dbReference type="PROSITE" id="PS00101">
    <property type="entry name" value="HEXAPEP_TRANSFERASES"/>
    <property type="match status" value="1"/>
</dbReference>
<name>LPXD_PSE14</name>
<protein>
    <recommendedName>
        <fullName evidence="1">UDP-3-O-acylglucosamine N-acyltransferase</fullName>
        <ecNumber evidence="1">2.3.1.191</ecNumber>
    </recommendedName>
</protein>
<gene>
    <name evidence="1" type="primary">lpxD</name>
    <name type="ordered locus">PSPPH_3830</name>
</gene>
<accession>Q48F69</accession>
<keyword id="KW-0012">Acyltransferase</keyword>
<keyword id="KW-0441">Lipid A biosynthesis</keyword>
<keyword id="KW-0444">Lipid biosynthesis</keyword>
<keyword id="KW-0443">Lipid metabolism</keyword>
<keyword id="KW-0677">Repeat</keyword>
<keyword id="KW-0808">Transferase</keyword>
<sequence>MSITIKLGQLAEFLGATLRGDKDKDITGLAALQEAGPGQISFLAKSQYRKFLVDAQAAAVLLKPADADSYTGDALLVPDPYLAYARISHFFDPKPKGVAGVHPTAVIADDAQVDPAASIGAFVVIESGARIAAGVTIGAHSFIGARCEIGEGGWLAPRVTLYHDVRIGKHVVIQSGAVLGGEGFGFANEKGVWQKIAQIGGVTLGDDVEVGVNTAIDRGALADTRIGNGVKLDNQIQIAHNVQVGDHTAMAACVGISGSTKIGKHCMLAGGVGLVGHIDICDGVYITGMTMVTHSITEPGSYSSGTAMQPAAEWRKSAARLRKIDDMARRLQKLEKAVETVTCADNRSSDG</sequence>
<organism>
    <name type="scientific">Pseudomonas savastanoi pv. phaseolicola (strain 1448A / Race 6)</name>
    <name type="common">Pseudomonas syringae pv. phaseolicola (strain 1448A / Race 6)</name>
    <dbReference type="NCBI Taxonomy" id="264730"/>
    <lineage>
        <taxon>Bacteria</taxon>
        <taxon>Pseudomonadati</taxon>
        <taxon>Pseudomonadota</taxon>
        <taxon>Gammaproteobacteria</taxon>
        <taxon>Pseudomonadales</taxon>
        <taxon>Pseudomonadaceae</taxon>
        <taxon>Pseudomonas</taxon>
    </lineage>
</organism>
<reference key="1">
    <citation type="journal article" date="2005" name="J. Bacteriol.">
        <title>Whole-genome sequence analysis of Pseudomonas syringae pv. phaseolicola 1448A reveals divergence among pathovars in genes involved in virulence and transposition.</title>
        <authorList>
            <person name="Joardar V."/>
            <person name="Lindeberg M."/>
            <person name="Jackson R.W."/>
            <person name="Selengut J."/>
            <person name="Dodson R."/>
            <person name="Brinkac L.M."/>
            <person name="Daugherty S.C."/>
            <person name="DeBoy R.T."/>
            <person name="Durkin A.S."/>
            <person name="Gwinn Giglio M."/>
            <person name="Madupu R."/>
            <person name="Nelson W.C."/>
            <person name="Rosovitz M.J."/>
            <person name="Sullivan S.A."/>
            <person name="Crabtree J."/>
            <person name="Creasy T."/>
            <person name="Davidsen T.M."/>
            <person name="Haft D.H."/>
            <person name="Zafar N."/>
            <person name="Zhou L."/>
            <person name="Halpin R."/>
            <person name="Holley T."/>
            <person name="Khouri H.M."/>
            <person name="Feldblyum T.V."/>
            <person name="White O."/>
            <person name="Fraser C.M."/>
            <person name="Chatterjee A.K."/>
            <person name="Cartinhour S."/>
            <person name="Schneider D."/>
            <person name="Mansfield J.W."/>
            <person name="Collmer A."/>
            <person name="Buell R."/>
        </authorList>
    </citation>
    <scope>NUCLEOTIDE SEQUENCE [LARGE SCALE GENOMIC DNA]</scope>
    <source>
        <strain>1448A / Race 6</strain>
    </source>
</reference>
<evidence type="ECO:0000255" key="1">
    <source>
        <dbReference type="HAMAP-Rule" id="MF_00523"/>
    </source>
</evidence>
<comment type="function">
    <text evidence="1">Catalyzes the N-acylation of UDP-3-O-acylglucosamine using 3-hydroxyacyl-ACP as the acyl donor. Is involved in the biosynthesis of lipid A, a phosphorylated glycolipid that anchors the lipopolysaccharide to the outer membrane of the cell.</text>
</comment>
<comment type="catalytic activity">
    <reaction evidence="1">
        <text>a UDP-3-O-[(3R)-3-hydroxyacyl]-alpha-D-glucosamine + a (3R)-hydroxyacyl-[ACP] = a UDP-2-N,3-O-bis[(3R)-3-hydroxyacyl]-alpha-D-glucosamine + holo-[ACP] + H(+)</text>
        <dbReference type="Rhea" id="RHEA:53836"/>
        <dbReference type="Rhea" id="RHEA-COMP:9685"/>
        <dbReference type="Rhea" id="RHEA-COMP:9945"/>
        <dbReference type="ChEBI" id="CHEBI:15378"/>
        <dbReference type="ChEBI" id="CHEBI:64479"/>
        <dbReference type="ChEBI" id="CHEBI:78827"/>
        <dbReference type="ChEBI" id="CHEBI:137740"/>
        <dbReference type="ChEBI" id="CHEBI:137748"/>
        <dbReference type="EC" id="2.3.1.191"/>
    </reaction>
</comment>
<comment type="pathway">
    <text evidence="1">Bacterial outer membrane biogenesis; LPS lipid A biosynthesis.</text>
</comment>
<comment type="subunit">
    <text evidence="1">Homotrimer.</text>
</comment>
<comment type="similarity">
    <text evidence="1">Belongs to the transferase hexapeptide repeat family. LpxD subfamily.</text>
</comment>